<comment type="function">
    <text evidence="1">NDH-1 shuttles electrons from NADH, via FMN and iron-sulfur (Fe-S) centers, to quinones in the respiratory chain. Couples the redox reaction to proton translocation (for every two electrons transferred, four hydrogen ions are translocated across the cytoplasmic membrane), and thus conserves the redox energy in a proton gradient (By similarity).</text>
</comment>
<comment type="catalytic activity">
    <reaction evidence="2">
        <text>a quinone + NADH + 5 H(+)(in) = a quinol + NAD(+) + 4 H(+)(out)</text>
        <dbReference type="Rhea" id="RHEA:57888"/>
        <dbReference type="ChEBI" id="CHEBI:15378"/>
        <dbReference type="ChEBI" id="CHEBI:24646"/>
        <dbReference type="ChEBI" id="CHEBI:57540"/>
        <dbReference type="ChEBI" id="CHEBI:57945"/>
        <dbReference type="ChEBI" id="CHEBI:132124"/>
    </reaction>
</comment>
<comment type="cofactor">
    <cofactor evidence="2">
        <name>[4Fe-4S] cluster</name>
        <dbReference type="ChEBI" id="CHEBI:49883"/>
    </cofactor>
    <text evidence="2">Binds 1 [4Fe-4S] cluster.</text>
</comment>
<comment type="subunit">
    <text evidence="2">NDH-1 is composed of 14 different subunits. Subunits NuoB, C, D, E, F, and G constitute the peripheral sector of the complex.</text>
</comment>
<comment type="subcellular location">
    <subcellularLocation>
        <location evidence="2">Cell inner membrane</location>
        <topology evidence="2">Peripheral membrane protein</topology>
        <orientation evidence="2">Cytoplasmic side</orientation>
    </subcellularLocation>
</comment>
<comment type="similarity">
    <text evidence="2">Belongs to the complex I 20 kDa subunit family.</text>
</comment>
<feature type="chain" id="PRO_0000358402" description="NADH-quinone oxidoreductase subunit B">
    <location>
        <begin position="1"/>
        <end position="159"/>
    </location>
</feature>
<feature type="binding site" evidence="2">
    <location>
        <position position="36"/>
    </location>
    <ligand>
        <name>[4Fe-4S] cluster</name>
        <dbReference type="ChEBI" id="CHEBI:49883"/>
    </ligand>
</feature>
<feature type="binding site" evidence="2">
    <location>
        <position position="37"/>
    </location>
    <ligand>
        <name>[4Fe-4S] cluster</name>
        <dbReference type="ChEBI" id="CHEBI:49883"/>
    </ligand>
</feature>
<feature type="binding site" evidence="2">
    <location>
        <position position="102"/>
    </location>
    <ligand>
        <name>[4Fe-4S] cluster</name>
        <dbReference type="ChEBI" id="CHEBI:49883"/>
    </ligand>
</feature>
<feature type="binding site" evidence="2">
    <location>
        <position position="132"/>
    </location>
    <ligand>
        <name>[4Fe-4S] cluster</name>
        <dbReference type="ChEBI" id="CHEBI:49883"/>
    </ligand>
</feature>
<organism>
    <name type="scientific">Delftia acidovorans (strain DSM 14801 / SPH-1)</name>
    <dbReference type="NCBI Taxonomy" id="398578"/>
    <lineage>
        <taxon>Bacteria</taxon>
        <taxon>Pseudomonadati</taxon>
        <taxon>Pseudomonadota</taxon>
        <taxon>Betaproteobacteria</taxon>
        <taxon>Burkholderiales</taxon>
        <taxon>Comamonadaceae</taxon>
        <taxon>Delftia</taxon>
    </lineage>
</organism>
<proteinExistence type="inferred from homology"/>
<name>NUOB_DELAS</name>
<sequence>MIEGVMKEGFITTSYDSVVNWAKTGSLWPMTFGLACCAVEMMHAAAARYDIGRFGSEVFRASPRQSDLMIVAGTLCNKMAPAMRKVYDQMSEPRWVISMGSCANGGGYYHYSYSVVRGCDRIVPVDVYVPGCPPTAEALIYGIIQLQQKIRRTHTIARV</sequence>
<protein>
    <recommendedName>
        <fullName evidence="2">NADH-quinone oxidoreductase subunit B</fullName>
        <ecNumber evidence="2">7.1.1.-</ecNumber>
    </recommendedName>
    <alternativeName>
        <fullName evidence="2">NADH dehydrogenase I subunit B</fullName>
    </alternativeName>
    <alternativeName>
        <fullName evidence="2">NDH-1 subunit B</fullName>
    </alternativeName>
</protein>
<evidence type="ECO:0000250" key="1"/>
<evidence type="ECO:0000255" key="2">
    <source>
        <dbReference type="HAMAP-Rule" id="MF_01356"/>
    </source>
</evidence>
<accession>A9BNB3</accession>
<reference key="1">
    <citation type="submission" date="2007-11" db="EMBL/GenBank/DDBJ databases">
        <title>Complete sequence of Delftia acidovorans DSM 14801 / SPH-1.</title>
        <authorList>
            <person name="Copeland A."/>
            <person name="Lucas S."/>
            <person name="Lapidus A."/>
            <person name="Barry K."/>
            <person name="Glavina del Rio T."/>
            <person name="Dalin E."/>
            <person name="Tice H."/>
            <person name="Pitluck S."/>
            <person name="Lowry S."/>
            <person name="Clum A."/>
            <person name="Schmutz J."/>
            <person name="Larimer F."/>
            <person name="Land M."/>
            <person name="Hauser L."/>
            <person name="Kyrpides N."/>
            <person name="Kim E."/>
            <person name="Schleheck D."/>
            <person name="Richardson P."/>
        </authorList>
    </citation>
    <scope>NUCLEOTIDE SEQUENCE [LARGE SCALE GENOMIC DNA]</scope>
    <source>
        <strain>DSM 14801 / SPH-1</strain>
    </source>
</reference>
<dbReference type="EC" id="7.1.1.-" evidence="2"/>
<dbReference type="EMBL" id="CP000884">
    <property type="protein sequence ID" value="ABX37808.1"/>
    <property type="molecule type" value="Genomic_DNA"/>
</dbReference>
<dbReference type="RefSeq" id="WP_012206978.1">
    <property type="nucleotide sequence ID" value="NC_010002.1"/>
</dbReference>
<dbReference type="SMR" id="A9BNB3"/>
<dbReference type="STRING" id="398578.Daci_5179"/>
<dbReference type="KEGG" id="dac:Daci_5179"/>
<dbReference type="eggNOG" id="COG0377">
    <property type="taxonomic scope" value="Bacteria"/>
</dbReference>
<dbReference type="HOGENOM" id="CLU_055737_7_3_4"/>
<dbReference type="Proteomes" id="UP000000784">
    <property type="component" value="Chromosome"/>
</dbReference>
<dbReference type="GO" id="GO:0005886">
    <property type="term" value="C:plasma membrane"/>
    <property type="evidence" value="ECO:0007669"/>
    <property type="project" value="UniProtKB-SubCell"/>
</dbReference>
<dbReference type="GO" id="GO:0045271">
    <property type="term" value="C:respiratory chain complex I"/>
    <property type="evidence" value="ECO:0007669"/>
    <property type="project" value="TreeGrafter"/>
</dbReference>
<dbReference type="GO" id="GO:0051539">
    <property type="term" value="F:4 iron, 4 sulfur cluster binding"/>
    <property type="evidence" value="ECO:0007669"/>
    <property type="project" value="UniProtKB-KW"/>
</dbReference>
<dbReference type="GO" id="GO:0005506">
    <property type="term" value="F:iron ion binding"/>
    <property type="evidence" value="ECO:0007669"/>
    <property type="project" value="UniProtKB-UniRule"/>
</dbReference>
<dbReference type="GO" id="GO:0008137">
    <property type="term" value="F:NADH dehydrogenase (ubiquinone) activity"/>
    <property type="evidence" value="ECO:0007669"/>
    <property type="project" value="InterPro"/>
</dbReference>
<dbReference type="GO" id="GO:0050136">
    <property type="term" value="F:NADH:ubiquinone reductase (non-electrogenic) activity"/>
    <property type="evidence" value="ECO:0007669"/>
    <property type="project" value="UniProtKB-UniRule"/>
</dbReference>
<dbReference type="GO" id="GO:0048038">
    <property type="term" value="F:quinone binding"/>
    <property type="evidence" value="ECO:0007669"/>
    <property type="project" value="UniProtKB-KW"/>
</dbReference>
<dbReference type="GO" id="GO:0009060">
    <property type="term" value="P:aerobic respiration"/>
    <property type="evidence" value="ECO:0007669"/>
    <property type="project" value="TreeGrafter"/>
</dbReference>
<dbReference type="GO" id="GO:0015990">
    <property type="term" value="P:electron transport coupled proton transport"/>
    <property type="evidence" value="ECO:0007669"/>
    <property type="project" value="TreeGrafter"/>
</dbReference>
<dbReference type="FunFam" id="3.40.50.12280:FF:000001">
    <property type="entry name" value="NADH-quinone oxidoreductase subunit B 2"/>
    <property type="match status" value="1"/>
</dbReference>
<dbReference type="Gene3D" id="3.40.50.12280">
    <property type="match status" value="1"/>
</dbReference>
<dbReference type="HAMAP" id="MF_01356">
    <property type="entry name" value="NDH1_NuoB"/>
    <property type="match status" value="1"/>
</dbReference>
<dbReference type="InterPro" id="IPR006137">
    <property type="entry name" value="NADH_UbQ_OxRdtase-like_20kDa"/>
</dbReference>
<dbReference type="InterPro" id="IPR006138">
    <property type="entry name" value="NADH_UQ_OxRdtase_20Kd_su"/>
</dbReference>
<dbReference type="NCBIfam" id="TIGR01957">
    <property type="entry name" value="nuoB_fam"/>
    <property type="match status" value="1"/>
</dbReference>
<dbReference type="NCBIfam" id="NF005012">
    <property type="entry name" value="PRK06411.1"/>
    <property type="match status" value="1"/>
</dbReference>
<dbReference type="PANTHER" id="PTHR11995">
    <property type="entry name" value="NADH DEHYDROGENASE"/>
    <property type="match status" value="1"/>
</dbReference>
<dbReference type="PANTHER" id="PTHR11995:SF14">
    <property type="entry name" value="NADH DEHYDROGENASE [UBIQUINONE] IRON-SULFUR PROTEIN 7, MITOCHONDRIAL"/>
    <property type="match status" value="1"/>
</dbReference>
<dbReference type="Pfam" id="PF01058">
    <property type="entry name" value="Oxidored_q6"/>
    <property type="match status" value="1"/>
</dbReference>
<dbReference type="SUPFAM" id="SSF56770">
    <property type="entry name" value="HydA/Nqo6-like"/>
    <property type="match status" value="1"/>
</dbReference>
<dbReference type="PROSITE" id="PS01150">
    <property type="entry name" value="COMPLEX1_20K"/>
    <property type="match status" value="1"/>
</dbReference>
<keyword id="KW-0004">4Fe-4S</keyword>
<keyword id="KW-0997">Cell inner membrane</keyword>
<keyword id="KW-1003">Cell membrane</keyword>
<keyword id="KW-0408">Iron</keyword>
<keyword id="KW-0411">Iron-sulfur</keyword>
<keyword id="KW-0472">Membrane</keyword>
<keyword id="KW-0479">Metal-binding</keyword>
<keyword id="KW-0520">NAD</keyword>
<keyword id="KW-0874">Quinone</keyword>
<keyword id="KW-1185">Reference proteome</keyword>
<keyword id="KW-1278">Translocase</keyword>
<keyword id="KW-0813">Transport</keyword>
<keyword id="KW-0830">Ubiquinone</keyword>
<gene>
    <name evidence="2" type="primary">nuoB</name>
    <name type="ordered locus">Daci_5179</name>
</gene>